<gene>
    <name evidence="3 5" type="ordered locus">STM3175</name>
</gene>
<accession>Q8ZM00</accession>
<name>Y3175_SALTY</name>
<protein>
    <recommendedName>
        <fullName evidence="4">Probable HTH-type transcriptional regulator STM3175</fullName>
    </recommendedName>
</protein>
<evidence type="ECO:0000255" key="1">
    <source>
        <dbReference type="PROSITE-ProRule" id="PRU00593"/>
    </source>
</evidence>
<evidence type="ECO:0000269" key="2">
    <source>
    </source>
</evidence>
<evidence type="ECO:0000303" key="3">
    <source>
    </source>
</evidence>
<evidence type="ECO:0000305" key="4">
    <source>
    </source>
</evidence>
<evidence type="ECO:0000312" key="5">
    <source>
        <dbReference type="EMBL" id="AAL22049.1"/>
    </source>
</evidence>
<evidence type="ECO:0000312" key="6">
    <source>
        <dbReference type="Proteomes" id="UP000001014"/>
    </source>
</evidence>
<evidence type="ECO:0007744" key="7">
    <source>
        <dbReference type="PDB" id="7R3W"/>
    </source>
</evidence>
<reference evidence="6" key="1">
    <citation type="journal article" date="2001" name="Nature">
        <title>Complete genome sequence of Salmonella enterica serovar Typhimurium LT2.</title>
        <authorList>
            <person name="McClelland M."/>
            <person name="Sanderson K.E."/>
            <person name="Spieth J."/>
            <person name="Clifton S.W."/>
            <person name="Latreille P."/>
            <person name="Courtney L."/>
            <person name="Porwollik S."/>
            <person name="Ali J."/>
            <person name="Dante M."/>
            <person name="Du F."/>
            <person name="Hou S."/>
            <person name="Layman D."/>
            <person name="Leonard S."/>
            <person name="Nguyen C."/>
            <person name="Scott K."/>
            <person name="Holmes A."/>
            <person name="Grewal N."/>
            <person name="Mulvaney E."/>
            <person name="Ryan E."/>
            <person name="Sun H."/>
            <person name="Florea L."/>
            <person name="Miller W."/>
            <person name="Stoneking T."/>
            <person name="Nhan M."/>
            <person name="Waterston R."/>
            <person name="Wilson R.K."/>
        </authorList>
    </citation>
    <scope>NUCLEOTIDE SEQUENCE [LARGE SCALE GENOMIC DNA]</scope>
    <source>
        <strain evidence="6">LT2 / SGSC1412 / ATCC 700720</strain>
    </source>
</reference>
<reference evidence="7" key="2">
    <citation type="journal article" date="2023" name="PLoS Biol.">
        <title>Gene amplifications cause high-level resistance against albicidin in gram-negative bacteria.</title>
        <authorList>
            <person name="Saathoff M."/>
            <person name="Kosol S."/>
            <person name="Semmler T."/>
            <person name="Tedin K."/>
            <person name="Dimos N."/>
            <person name="Kupke J."/>
            <person name="Seidel M."/>
            <person name="Ghazisaeedi F."/>
            <person name="Jonske M.C."/>
            <person name="Wolf S.A."/>
            <person name="Kuropka B."/>
            <person name="Czyszczon W."/>
            <person name="Ghilarov D."/>
            <person name="Graetz S."/>
            <person name="Heddle J.G."/>
            <person name="Loll B."/>
            <person name="Suessmuth R.D."/>
            <person name="Fulde M."/>
        </authorList>
    </citation>
    <scope>X-RAY CRYSTALLOGRAPHY (3.60 ANGSTROMS)</scope>
    <scope>FUNCTION</scope>
    <scope>SUBUNIT</scope>
    <scope>DOMAIN</scope>
    <scope>MUTAGENESIS OF 265-PHE--TYR-267 AND PHE-265</scope>
</reference>
<keyword id="KW-0002">3D-structure</keyword>
<keyword id="KW-0238">DNA-binding</keyword>
<keyword id="KW-1185">Reference proteome</keyword>
<keyword id="KW-0804">Transcription</keyword>
<keyword id="KW-0805">Transcription regulation</keyword>
<feature type="chain" id="PRO_0000459167" description="Probable HTH-type transcriptional regulator STM3175">
    <location>
        <begin position="1"/>
        <end position="288"/>
    </location>
</feature>
<feature type="domain" description="HTH araC/xylS-type" evidence="1">
    <location>
        <begin position="14"/>
        <end position="113"/>
    </location>
</feature>
<feature type="DNA-binding region" description="H-T-H motif" evidence="1">
    <location>
        <begin position="31"/>
        <end position="52"/>
    </location>
</feature>
<feature type="DNA-binding region" description="H-T-H motif" evidence="1">
    <location>
        <begin position="80"/>
        <end position="103"/>
    </location>
</feature>
<feature type="region of interest" description="Putative effector binding domain; binds the peptide antibiotic albicidin" evidence="2">
    <location>
        <begin position="111"/>
        <end position="288"/>
    </location>
</feature>
<feature type="mutagenesis site" description="Reduces albicidin tolerance drastically." evidence="2">
    <original>FQY</original>
    <variation>AQA</variation>
    <location>
        <begin position="265"/>
        <end position="267"/>
    </location>
</feature>
<feature type="mutagenesis site" description="Reduces albicidin tolerance drastically." evidence="2">
    <original>F</original>
    <variation>A</variation>
    <location>
        <position position="265"/>
    </location>
</feature>
<feature type="mutagenesis site" description="Reduces albicidin tolerance drastically." evidence="2">
    <original>F</original>
    <variation>E</variation>
    <location>
        <position position="265"/>
    </location>
</feature>
<dbReference type="EMBL" id="AE006468">
    <property type="protein sequence ID" value="AAL22049.1"/>
    <property type="molecule type" value="Genomic_DNA"/>
</dbReference>
<dbReference type="RefSeq" id="NP_462090.1">
    <property type="nucleotide sequence ID" value="NC_003197.2"/>
</dbReference>
<dbReference type="RefSeq" id="WP_000998789.1">
    <property type="nucleotide sequence ID" value="NC_003197.2"/>
</dbReference>
<dbReference type="PDB" id="7R3W">
    <property type="method" value="X-ray"/>
    <property type="resolution" value="3.60 A"/>
    <property type="chains" value="A/B/C/D=1-288"/>
</dbReference>
<dbReference type="PDBsum" id="7R3W"/>
<dbReference type="SMR" id="Q8ZM00"/>
<dbReference type="STRING" id="99287.STM3175"/>
<dbReference type="PaxDb" id="99287-STM3175"/>
<dbReference type="GeneID" id="1254698"/>
<dbReference type="KEGG" id="stm:STM3175"/>
<dbReference type="PATRIC" id="fig|99287.12.peg.3366"/>
<dbReference type="HOGENOM" id="CLU_000445_81_1_6"/>
<dbReference type="OMA" id="GAWDFLY"/>
<dbReference type="PhylomeDB" id="Q8ZM00"/>
<dbReference type="BioCyc" id="SENT99287:STM3175-MONOMER"/>
<dbReference type="Proteomes" id="UP000001014">
    <property type="component" value="Chromosome"/>
</dbReference>
<dbReference type="GO" id="GO:0003700">
    <property type="term" value="F:DNA-binding transcription factor activity"/>
    <property type="evidence" value="ECO:0007669"/>
    <property type="project" value="InterPro"/>
</dbReference>
<dbReference type="GO" id="GO:0042277">
    <property type="term" value="F:peptide binding"/>
    <property type="evidence" value="ECO:0000314"/>
    <property type="project" value="UniProtKB"/>
</dbReference>
<dbReference type="GO" id="GO:0043565">
    <property type="term" value="F:sequence-specific DNA binding"/>
    <property type="evidence" value="ECO:0007669"/>
    <property type="project" value="InterPro"/>
</dbReference>
<dbReference type="GO" id="GO:0071236">
    <property type="term" value="P:cellular response to antibiotic"/>
    <property type="evidence" value="ECO:0000315"/>
    <property type="project" value="UniProtKB"/>
</dbReference>
<dbReference type="Gene3D" id="1.10.10.60">
    <property type="entry name" value="Homeodomain-like"/>
    <property type="match status" value="2"/>
</dbReference>
<dbReference type="Gene3D" id="3.20.80.10">
    <property type="entry name" value="Regulatory factor, effector binding domain"/>
    <property type="match status" value="1"/>
</dbReference>
<dbReference type="InterPro" id="IPR010499">
    <property type="entry name" value="AraC_E-bd"/>
</dbReference>
<dbReference type="InterPro" id="IPR050908">
    <property type="entry name" value="DNA_gyrase_inhibitor"/>
</dbReference>
<dbReference type="InterPro" id="IPR029442">
    <property type="entry name" value="GyrI-like"/>
</dbReference>
<dbReference type="InterPro" id="IPR009057">
    <property type="entry name" value="Homeodomain-like_sf"/>
</dbReference>
<dbReference type="InterPro" id="IPR018060">
    <property type="entry name" value="HTH_AraC"/>
</dbReference>
<dbReference type="InterPro" id="IPR018062">
    <property type="entry name" value="HTH_AraC-typ_CS"/>
</dbReference>
<dbReference type="InterPro" id="IPR011256">
    <property type="entry name" value="Reg_factor_effector_dom_sf"/>
</dbReference>
<dbReference type="InterPro" id="IPR020449">
    <property type="entry name" value="Tscrpt_reg_AraC-type_HTH"/>
</dbReference>
<dbReference type="PANTHER" id="PTHR40055">
    <property type="entry name" value="TRANSCRIPTIONAL REGULATOR YGIV-RELATED"/>
    <property type="match status" value="1"/>
</dbReference>
<dbReference type="PANTHER" id="PTHR40055:SF1">
    <property type="entry name" value="TRANSCRIPTIONAL REGULATOR YGIV-RELATED"/>
    <property type="match status" value="1"/>
</dbReference>
<dbReference type="Pfam" id="PF06445">
    <property type="entry name" value="GyrI-like"/>
    <property type="match status" value="1"/>
</dbReference>
<dbReference type="Pfam" id="PF12833">
    <property type="entry name" value="HTH_18"/>
    <property type="match status" value="1"/>
</dbReference>
<dbReference type="PRINTS" id="PR00032">
    <property type="entry name" value="HTHARAC"/>
</dbReference>
<dbReference type="SMART" id="SM00871">
    <property type="entry name" value="AraC_E_bind"/>
    <property type="match status" value="1"/>
</dbReference>
<dbReference type="SMART" id="SM00342">
    <property type="entry name" value="HTH_ARAC"/>
    <property type="match status" value="1"/>
</dbReference>
<dbReference type="SUPFAM" id="SSF46689">
    <property type="entry name" value="Homeodomain-like"/>
    <property type="match status" value="2"/>
</dbReference>
<dbReference type="SUPFAM" id="SSF55136">
    <property type="entry name" value="Probable bacterial effector-binding domain"/>
    <property type="match status" value="1"/>
</dbReference>
<dbReference type="PROSITE" id="PS00041">
    <property type="entry name" value="HTH_ARAC_FAMILY_1"/>
    <property type="match status" value="1"/>
</dbReference>
<dbReference type="PROSITE" id="PS01124">
    <property type="entry name" value="HTH_ARAC_FAMILY_2"/>
    <property type="match status" value="1"/>
</dbReference>
<sequence length="288" mass="33324">MNDLISAAYSERLRRVCDHIERHLDEPLSIEALSRMAHSSPFHFHRQFTTWSGLPLYRYIQWLRLRRASWRLAFNPQDKVIDIALDAGFQNPESFTRAFKTAFGQSPRRFRQSPDWLAWHQRVPKLALQEQHVMDVKIVEFPPTRVAMLTHLGHPDKVNASAAKFIAWRRETGQSPIASSQTFGIAWHDPQTTPPAQFRFDICGSVRQPIAENDVGVVNSEIPGGRCAVVRHQGSLDSLPESVWYLFREWLPASGETPRDFPVFFQYLNFVHEVAEHELLTDIYLPLR</sequence>
<organism evidence="6">
    <name type="scientific">Salmonella typhimurium (strain LT2 / SGSC1412 / ATCC 700720)</name>
    <dbReference type="NCBI Taxonomy" id="99287"/>
    <lineage>
        <taxon>Bacteria</taxon>
        <taxon>Pseudomonadati</taxon>
        <taxon>Pseudomonadota</taxon>
        <taxon>Gammaproteobacteria</taxon>
        <taxon>Enterobacterales</taxon>
        <taxon>Enterobacteriaceae</taxon>
        <taxon>Salmonella</taxon>
    </lineage>
</organism>
<proteinExistence type="evidence at protein level"/>
<comment type="function">
    <text evidence="3">Probable transcription factor.</text>
</comment>
<comment type="subunit">
    <text evidence="2">Homodimer.</text>
</comment>
<comment type="domain">
    <text evidence="2">Binds the peptide antibiotic albicidin with sub-micromolar affinity.</text>
</comment>
<comment type="miscellaneous">
    <text evidence="2">Duplication of the STM3175 gene increases tolerance of albicidin.</text>
</comment>